<protein>
    <recommendedName>
        <fullName evidence="1">Small ribosomal subunit protein uS11</fullName>
    </recommendedName>
    <alternativeName>
        <fullName evidence="2">30S ribosomal protein S11</fullName>
    </alternativeName>
</protein>
<name>RS11_SHEON</name>
<evidence type="ECO:0000255" key="1">
    <source>
        <dbReference type="HAMAP-Rule" id="MF_01310"/>
    </source>
</evidence>
<evidence type="ECO:0000305" key="2"/>
<keyword id="KW-1185">Reference proteome</keyword>
<keyword id="KW-0687">Ribonucleoprotein</keyword>
<keyword id="KW-0689">Ribosomal protein</keyword>
<keyword id="KW-0694">RNA-binding</keyword>
<keyword id="KW-0699">rRNA-binding</keyword>
<accession>P59375</accession>
<reference key="1">
    <citation type="journal article" date="2002" name="Nat. Biotechnol.">
        <title>Genome sequence of the dissimilatory metal ion-reducing bacterium Shewanella oneidensis.</title>
        <authorList>
            <person name="Heidelberg J.F."/>
            <person name="Paulsen I.T."/>
            <person name="Nelson K.E."/>
            <person name="Gaidos E.J."/>
            <person name="Nelson W.C."/>
            <person name="Read T.D."/>
            <person name="Eisen J.A."/>
            <person name="Seshadri R."/>
            <person name="Ward N.L."/>
            <person name="Methe B.A."/>
            <person name="Clayton R.A."/>
            <person name="Meyer T."/>
            <person name="Tsapin A."/>
            <person name="Scott J."/>
            <person name="Beanan M.J."/>
            <person name="Brinkac L.M."/>
            <person name="Daugherty S.C."/>
            <person name="DeBoy R.T."/>
            <person name="Dodson R.J."/>
            <person name="Durkin A.S."/>
            <person name="Haft D.H."/>
            <person name="Kolonay J.F."/>
            <person name="Madupu R."/>
            <person name="Peterson J.D."/>
            <person name="Umayam L.A."/>
            <person name="White O."/>
            <person name="Wolf A.M."/>
            <person name="Vamathevan J.J."/>
            <person name="Weidman J.F."/>
            <person name="Impraim M."/>
            <person name="Lee K."/>
            <person name="Berry K.J."/>
            <person name="Lee C."/>
            <person name="Mueller J."/>
            <person name="Khouri H.M."/>
            <person name="Gill J."/>
            <person name="Utterback T.R."/>
            <person name="McDonald L.A."/>
            <person name="Feldblyum T.V."/>
            <person name="Smith H.O."/>
            <person name="Venter J.C."/>
            <person name="Nealson K.H."/>
            <person name="Fraser C.M."/>
        </authorList>
    </citation>
    <scope>NUCLEOTIDE SEQUENCE [LARGE SCALE GENOMIC DNA]</scope>
    <source>
        <strain>ATCC 700550 / JCM 31522 / CIP 106686 / LMG 19005 / NCIMB 14063 / MR-1</strain>
    </source>
</reference>
<gene>
    <name evidence="1" type="primary">rpsK</name>
    <name type="ordered locus">SO_0254</name>
</gene>
<sequence>MAKVPSRSPRKRVRKQVADGMAHIHASFNNTIVTITDRQGNALSWATSGGSGFRGSRKSTPFAAQVAAERAGAAAQDYGLKNLEVFVKGPGPGRESAIRALNAVGYKITNITDVTPIPHNGCRPPKKRRV</sequence>
<organism>
    <name type="scientific">Shewanella oneidensis (strain ATCC 700550 / JCM 31522 / CIP 106686 / LMG 19005 / NCIMB 14063 / MR-1)</name>
    <dbReference type="NCBI Taxonomy" id="211586"/>
    <lineage>
        <taxon>Bacteria</taxon>
        <taxon>Pseudomonadati</taxon>
        <taxon>Pseudomonadota</taxon>
        <taxon>Gammaproteobacteria</taxon>
        <taxon>Alteromonadales</taxon>
        <taxon>Shewanellaceae</taxon>
        <taxon>Shewanella</taxon>
    </lineage>
</organism>
<dbReference type="EMBL" id="AE014299">
    <property type="protein sequence ID" value="AAN53339.1"/>
    <property type="molecule type" value="Genomic_DNA"/>
</dbReference>
<dbReference type="RefSeq" id="NP_715894.1">
    <property type="nucleotide sequence ID" value="NC_004347.2"/>
</dbReference>
<dbReference type="RefSeq" id="WP_006083577.1">
    <property type="nucleotide sequence ID" value="NZ_CP053946.1"/>
</dbReference>
<dbReference type="SMR" id="P59375"/>
<dbReference type="STRING" id="211586.SO_0254"/>
<dbReference type="PaxDb" id="211586-SO_0254"/>
<dbReference type="GeneID" id="94726209"/>
<dbReference type="KEGG" id="son:SO_0254"/>
<dbReference type="PATRIC" id="fig|211586.12.peg.242"/>
<dbReference type="eggNOG" id="COG0100">
    <property type="taxonomic scope" value="Bacteria"/>
</dbReference>
<dbReference type="HOGENOM" id="CLU_072439_5_0_6"/>
<dbReference type="OrthoDB" id="9806415at2"/>
<dbReference type="PhylomeDB" id="P59375"/>
<dbReference type="BioCyc" id="SONE211586:G1GMP-243-MONOMER"/>
<dbReference type="PRO" id="PR:P59375"/>
<dbReference type="Proteomes" id="UP000008186">
    <property type="component" value="Chromosome"/>
</dbReference>
<dbReference type="GO" id="GO:0022627">
    <property type="term" value="C:cytosolic small ribosomal subunit"/>
    <property type="evidence" value="ECO:0000318"/>
    <property type="project" value="GO_Central"/>
</dbReference>
<dbReference type="GO" id="GO:0019843">
    <property type="term" value="F:rRNA binding"/>
    <property type="evidence" value="ECO:0007669"/>
    <property type="project" value="UniProtKB-UniRule"/>
</dbReference>
<dbReference type="GO" id="GO:0003735">
    <property type="term" value="F:structural constituent of ribosome"/>
    <property type="evidence" value="ECO:0000318"/>
    <property type="project" value="GO_Central"/>
</dbReference>
<dbReference type="GO" id="GO:0006412">
    <property type="term" value="P:translation"/>
    <property type="evidence" value="ECO:0000318"/>
    <property type="project" value="GO_Central"/>
</dbReference>
<dbReference type="FunFam" id="3.30.420.80:FF:000001">
    <property type="entry name" value="30S ribosomal protein S11"/>
    <property type="match status" value="1"/>
</dbReference>
<dbReference type="Gene3D" id="3.30.420.80">
    <property type="entry name" value="Ribosomal protein S11"/>
    <property type="match status" value="1"/>
</dbReference>
<dbReference type="HAMAP" id="MF_01310">
    <property type="entry name" value="Ribosomal_uS11"/>
    <property type="match status" value="1"/>
</dbReference>
<dbReference type="InterPro" id="IPR001971">
    <property type="entry name" value="Ribosomal_uS11"/>
</dbReference>
<dbReference type="InterPro" id="IPR019981">
    <property type="entry name" value="Ribosomal_uS11_bac-type"/>
</dbReference>
<dbReference type="InterPro" id="IPR018102">
    <property type="entry name" value="Ribosomal_uS11_CS"/>
</dbReference>
<dbReference type="InterPro" id="IPR036967">
    <property type="entry name" value="Ribosomal_uS11_sf"/>
</dbReference>
<dbReference type="NCBIfam" id="NF003698">
    <property type="entry name" value="PRK05309.1"/>
    <property type="match status" value="1"/>
</dbReference>
<dbReference type="NCBIfam" id="TIGR03632">
    <property type="entry name" value="uS11_bact"/>
    <property type="match status" value="1"/>
</dbReference>
<dbReference type="PANTHER" id="PTHR11759">
    <property type="entry name" value="40S RIBOSOMAL PROTEIN S14/30S RIBOSOMAL PROTEIN S11"/>
    <property type="match status" value="1"/>
</dbReference>
<dbReference type="Pfam" id="PF00411">
    <property type="entry name" value="Ribosomal_S11"/>
    <property type="match status" value="1"/>
</dbReference>
<dbReference type="PIRSF" id="PIRSF002131">
    <property type="entry name" value="Ribosomal_S11"/>
    <property type="match status" value="1"/>
</dbReference>
<dbReference type="SUPFAM" id="SSF53137">
    <property type="entry name" value="Translational machinery components"/>
    <property type="match status" value="1"/>
</dbReference>
<dbReference type="PROSITE" id="PS00054">
    <property type="entry name" value="RIBOSOMAL_S11"/>
    <property type="match status" value="1"/>
</dbReference>
<proteinExistence type="inferred from homology"/>
<comment type="function">
    <text evidence="1">Located on the platform of the 30S subunit, it bridges several disparate RNA helices of the 16S rRNA. Forms part of the Shine-Dalgarno cleft in the 70S ribosome.</text>
</comment>
<comment type="subunit">
    <text evidence="1">Part of the 30S ribosomal subunit. Interacts with proteins S7 and S18. Binds to IF-3.</text>
</comment>
<comment type="similarity">
    <text evidence="1">Belongs to the universal ribosomal protein uS11 family.</text>
</comment>
<feature type="chain" id="PRO_0000123214" description="Small ribosomal subunit protein uS11">
    <location>
        <begin position="1"/>
        <end position="130"/>
    </location>
</feature>